<comment type="alternative products">
    <event type="alternative splicing"/>
    <isoform>
        <id>A4FU01-1</id>
        <name>1</name>
        <sequence type="displayed"/>
    </isoform>
    <isoform>
        <id>A4FU01-2</id>
        <name>2</name>
        <name>hCRA alpha</name>
        <sequence type="described" ref="VSP_033887 VSP_033888"/>
    </isoform>
    <isoform>
        <id>A4FU01-3</id>
        <name>3</name>
        <sequence type="described" ref="VSP_033884 VSP_033887 VSP_033888"/>
    </isoform>
    <isoform>
        <id>A4FU01-4</id>
        <name>4</name>
        <sequence type="described" ref="VSP_033883 VSP_033885 VSP_033890"/>
    </isoform>
    <isoform>
        <id>A4FU01-5</id>
        <name>5</name>
        <name>hCRA beta</name>
        <sequence type="described" ref="VSP_033886 VSP_033889"/>
    </isoform>
    <isoform>
        <id>A4FU01-6</id>
        <name>6</name>
        <sequence type="described" ref="VSP_033884 VSP_035725 VSP_035726"/>
    </isoform>
</comment>
<comment type="tissue specificity">
    <text evidence="4">Expressed in bone marrow, spleen and thymus.</text>
</comment>
<comment type="miscellaneous">
    <molecule>Isoform 2</molecule>
    <text evidence="8">May be produced at very low levels due to a premature stop codon in the mRNA, leading to nonsense-mediated mRNA decay.</text>
</comment>
<comment type="miscellaneous">
    <molecule>Isoform 3</molecule>
    <text evidence="8">May be produced at very low levels due to a premature stop codon in the mRNA, leading to nonsense-mediated mRNA decay.</text>
</comment>
<comment type="similarity">
    <text evidence="8">Belongs to the protein-tyrosine phosphatase family. Non-receptor class myotubularin subfamily.</text>
</comment>
<comment type="caution">
    <text evidence="8">Although it belongs to the non-receptor class myotubularin subfamily, lacks the conserved active site cysteine residue at position 375 in the dsPTPase catalytic loop, suggesting that it has no phosphatase activity.</text>
</comment>
<comment type="sequence caution" evidence="8">
    <conflict type="frameshift">
        <sequence resource="EMBL-CDS" id="AAB36952"/>
    </conflict>
</comment>
<comment type="sequence caution" evidence="8">
    <conflict type="frameshift">
        <sequence resource="EMBL-CDS" id="AAB36953"/>
    </conflict>
</comment>
<comment type="sequence caution" evidence="8">
    <conflict type="erroneous initiation">
        <sequence resource="EMBL-CDS" id="AAH94756"/>
    </conflict>
</comment>
<evidence type="ECO:0000255" key="1">
    <source>
        <dbReference type="PROSITE-ProRule" id="PRU00669"/>
    </source>
</evidence>
<evidence type="ECO:0000256" key="2">
    <source>
        <dbReference type="SAM" id="MobiDB-lite"/>
    </source>
</evidence>
<evidence type="ECO:0000269" key="3">
    <source>
    </source>
</evidence>
<evidence type="ECO:0000269" key="4">
    <source>
    </source>
</evidence>
<evidence type="ECO:0000303" key="5">
    <source>
    </source>
</evidence>
<evidence type="ECO:0000303" key="6">
    <source>
    </source>
</evidence>
<evidence type="ECO:0000303" key="7">
    <source ref="1"/>
</evidence>
<evidence type="ECO:0000305" key="8"/>
<gene>
    <name type="primary">MTMR11</name>
</gene>
<organism>
    <name type="scientific">Homo sapiens</name>
    <name type="common">Human</name>
    <dbReference type="NCBI Taxonomy" id="9606"/>
    <lineage>
        <taxon>Eukaryota</taxon>
        <taxon>Metazoa</taxon>
        <taxon>Chordata</taxon>
        <taxon>Craniata</taxon>
        <taxon>Vertebrata</taxon>
        <taxon>Euteleostomi</taxon>
        <taxon>Mammalia</taxon>
        <taxon>Eutheria</taxon>
        <taxon>Euarchontoglires</taxon>
        <taxon>Primates</taxon>
        <taxon>Haplorrhini</taxon>
        <taxon>Catarrhini</taxon>
        <taxon>Hominidae</taxon>
        <taxon>Homo</taxon>
    </lineage>
</organism>
<feature type="chain" id="PRO_0000337098" description="Myotubularin-related protein 11">
    <location>
        <begin position="1"/>
        <end position="709"/>
    </location>
</feature>
<feature type="domain" description="Myotubularin phosphatase" evidence="1">
    <location>
        <begin position="196"/>
        <end position="639"/>
    </location>
</feature>
<feature type="region of interest" description="Disordered" evidence="2">
    <location>
        <begin position="1"/>
        <end position="39"/>
    </location>
</feature>
<feature type="splice variant" id="VSP_033883" description="In isoform 4." evidence="5">
    <location>
        <begin position="1"/>
        <end position="72"/>
    </location>
</feature>
<feature type="splice variant" id="VSP_033884" description="In isoform 3 and isoform 6." evidence="5 6">
    <location>
        <begin position="1"/>
        <end position="28"/>
    </location>
</feature>
<feature type="splice variant" id="VSP_033885" description="In isoform 4." evidence="5">
    <original>TNF</original>
    <variation>MPP</variation>
    <location>
        <begin position="73"/>
        <end position="75"/>
    </location>
</feature>
<feature type="splice variant" id="VSP_033886" description="In isoform 5." evidence="7">
    <original>SLPRYFWVPNRILDSEVRRAFGHFHQGRGPRLSWHHPGGSDLLRC</original>
    <variation>RLRCFSSSLIVSGSSSSSFQLILNSLSFSFLLFMTVSGFLTPLPS</variation>
    <location>
        <begin position="228"/>
        <end position="272"/>
    </location>
</feature>
<feature type="splice variant" id="VSP_033887" description="In isoform 2 and isoform 3." evidence="5 6 7">
    <original>RLSWHHPGGSD</original>
    <variation>VSVMVRVMAVD</variation>
    <location>
        <begin position="258"/>
        <end position="268"/>
    </location>
</feature>
<feature type="splice variant" id="VSP_033888" description="In isoform 2 and isoform 3." evidence="5 6 7">
    <location>
        <begin position="269"/>
        <end position="709"/>
    </location>
</feature>
<feature type="splice variant" id="VSP_033889" description="In isoform 5." evidence="7">
    <location>
        <begin position="273"/>
        <end position="709"/>
    </location>
</feature>
<feature type="splice variant" id="VSP_035725" description="In isoform 6." evidence="5">
    <original>ERGDRDLN</original>
    <variation>GSGVSPLP</variation>
    <location>
        <begin position="375"/>
        <end position="382"/>
    </location>
</feature>
<feature type="splice variant" id="VSP_035726" description="In isoform 6." evidence="5">
    <location>
        <begin position="383"/>
        <end position="709"/>
    </location>
</feature>
<feature type="splice variant" id="VSP_033890" description="In isoform 4." evidence="5">
    <original>RAEGDLG</original>
    <variation>QSHPFWITRC</variation>
    <location>
        <begin position="703"/>
        <end position="709"/>
    </location>
</feature>
<feature type="sequence variant" id="VAR_043598" description="In dbSNP:rs11205303." evidence="3">
    <original>M</original>
    <variation>V</variation>
    <location>
        <position position="159"/>
    </location>
</feature>
<feature type="sequence variant" id="VAR_043599" description="In dbSNP:rs16836857.">
    <original>Q</original>
    <variation>P</variation>
    <location>
        <position position="531"/>
    </location>
</feature>
<feature type="sequence conflict" description="In Ref. 2; BAG60917." evidence="8" ref="2">
    <original>W</original>
    <variation>R</variation>
    <location>
        <position position="86"/>
    </location>
</feature>
<feature type="sequence conflict" description="In Ref. 2; BAG60917." evidence="8" ref="2">
    <original>R</original>
    <variation>G</variation>
    <location>
        <position position="165"/>
    </location>
</feature>
<feature type="sequence conflict" description="In Ref. 2; BAG53406." evidence="8" ref="2">
    <original>H</original>
    <variation>R</variation>
    <location>
        <position position="263"/>
    </location>
</feature>
<reference key="1">
    <citation type="submission" date="1996-11" db="EMBL/GenBank/DDBJ databases">
        <authorList>
            <person name="Tanimura H."/>
            <person name="Ledakis P."/>
            <person name="Fojo T."/>
        </authorList>
    </citation>
    <scope>NUCLEOTIDE SEQUENCE [MRNA] (ISOFORMS 2 AND 5)</scope>
    <source>
        <tissue>Ovary tumor</tissue>
        <tissue>Small intestine</tissue>
        <tissue>Thalamus</tissue>
        <tissue>Uterus</tissue>
    </source>
</reference>
<reference key="2">
    <citation type="journal article" date="2004" name="Nat. Genet.">
        <title>Complete sequencing and characterization of 21,243 full-length human cDNAs.</title>
        <authorList>
            <person name="Ota T."/>
            <person name="Suzuki Y."/>
            <person name="Nishikawa T."/>
            <person name="Otsuki T."/>
            <person name="Sugiyama T."/>
            <person name="Irie R."/>
            <person name="Wakamatsu A."/>
            <person name="Hayashi K."/>
            <person name="Sato H."/>
            <person name="Nagai K."/>
            <person name="Kimura K."/>
            <person name="Makita H."/>
            <person name="Sekine M."/>
            <person name="Obayashi M."/>
            <person name="Nishi T."/>
            <person name="Shibahara T."/>
            <person name="Tanaka T."/>
            <person name="Ishii S."/>
            <person name="Yamamoto J."/>
            <person name="Saito K."/>
            <person name="Kawai Y."/>
            <person name="Isono Y."/>
            <person name="Nakamura Y."/>
            <person name="Nagahari K."/>
            <person name="Murakami K."/>
            <person name="Yasuda T."/>
            <person name="Iwayanagi T."/>
            <person name="Wagatsuma M."/>
            <person name="Shiratori A."/>
            <person name="Sudo H."/>
            <person name="Hosoiri T."/>
            <person name="Kaku Y."/>
            <person name="Kodaira H."/>
            <person name="Kondo H."/>
            <person name="Sugawara M."/>
            <person name="Takahashi M."/>
            <person name="Kanda K."/>
            <person name="Yokoi T."/>
            <person name="Furuya T."/>
            <person name="Kikkawa E."/>
            <person name="Omura Y."/>
            <person name="Abe K."/>
            <person name="Kamihara K."/>
            <person name="Katsuta N."/>
            <person name="Sato K."/>
            <person name="Tanikawa M."/>
            <person name="Yamazaki M."/>
            <person name="Ninomiya K."/>
            <person name="Ishibashi T."/>
            <person name="Yamashita H."/>
            <person name="Murakawa K."/>
            <person name="Fujimori K."/>
            <person name="Tanai H."/>
            <person name="Kimata M."/>
            <person name="Watanabe M."/>
            <person name="Hiraoka S."/>
            <person name="Chiba Y."/>
            <person name="Ishida S."/>
            <person name="Ono Y."/>
            <person name="Takiguchi S."/>
            <person name="Watanabe S."/>
            <person name="Yosida M."/>
            <person name="Hotuta T."/>
            <person name="Kusano J."/>
            <person name="Kanehori K."/>
            <person name="Takahashi-Fujii A."/>
            <person name="Hara H."/>
            <person name="Tanase T.-O."/>
            <person name="Nomura Y."/>
            <person name="Togiya S."/>
            <person name="Komai F."/>
            <person name="Hara R."/>
            <person name="Takeuchi K."/>
            <person name="Arita M."/>
            <person name="Imose N."/>
            <person name="Musashino K."/>
            <person name="Yuuki H."/>
            <person name="Oshima A."/>
            <person name="Sasaki N."/>
            <person name="Aotsuka S."/>
            <person name="Yoshikawa Y."/>
            <person name="Matsunawa H."/>
            <person name="Ichihara T."/>
            <person name="Shiohata N."/>
            <person name="Sano S."/>
            <person name="Moriya S."/>
            <person name="Momiyama H."/>
            <person name="Satoh N."/>
            <person name="Takami S."/>
            <person name="Terashima Y."/>
            <person name="Suzuki O."/>
            <person name="Nakagawa S."/>
            <person name="Senoh A."/>
            <person name="Mizoguchi H."/>
            <person name="Goto Y."/>
            <person name="Shimizu F."/>
            <person name="Wakebe H."/>
            <person name="Hishigaki H."/>
            <person name="Watanabe T."/>
            <person name="Sugiyama A."/>
            <person name="Takemoto M."/>
            <person name="Kawakami B."/>
            <person name="Yamazaki M."/>
            <person name="Watanabe K."/>
            <person name="Kumagai A."/>
            <person name="Itakura S."/>
            <person name="Fukuzumi Y."/>
            <person name="Fujimori Y."/>
            <person name="Komiyama M."/>
            <person name="Tashiro H."/>
            <person name="Tanigami A."/>
            <person name="Fujiwara T."/>
            <person name="Ono T."/>
            <person name="Yamada K."/>
            <person name="Fujii Y."/>
            <person name="Ozaki K."/>
            <person name="Hirao M."/>
            <person name="Ohmori Y."/>
            <person name="Kawabata A."/>
            <person name="Hikiji T."/>
            <person name="Kobatake N."/>
            <person name="Inagaki H."/>
            <person name="Ikema Y."/>
            <person name="Okamoto S."/>
            <person name="Okitani R."/>
            <person name="Kawakami T."/>
            <person name="Noguchi S."/>
            <person name="Itoh T."/>
            <person name="Shigeta K."/>
            <person name="Senba T."/>
            <person name="Matsumura K."/>
            <person name="Nakajima Y."/>
            <person name="Mizuno T."/>
            <person name="Morinaga M."/>
            <person name="Sasaki M."/>
            <person name="Togashi T."/>
            <person name="Oyama M."/>
            <person name="Hata H."/>
            <person name="Watanabe M."/>
            <person name="Komatsu T."/>
            <person name="Mizushima-Sugano J."/>
            <person name="Satoh T."/>
            <person name="Shirai Y."/>
            <person name="Takahashi Y."/>
            <person name="Nakagawa K."/>
            <person name="Okumura K."/>
            <person name="Nagase T."/>
            <person name="Nomura N."/>
            <person name="Kikuchi H."/>
            <person name="Masuho Y."/>
            <person name="Yamashita R."/>
            <person name="Nakai K."/>
            <person name="Yada T."/>
            <person name="Nakamura Y."/>
            <person name="Ohara O."/>
            <person name="Isogai T."/>
            <person name="Sugano S."/>
        </authorList>
    </citation>
    <scope>NUCLEOTIDE SEQUENCE [LARGE SCALE MRNA] (ISOFORMS 1; 2; 4 AND 6)</scope>
</reference>
<reference key="3">
    <citation type="journal article" date="2006" name="Nature">
        <title>The DNA sequence and biological annotation of human chromosome 1.</title>
        <authorList>
            <person name="Gregory S.G."/>
            <person name="Barlow K.F."/>
            <person name="McLay K.E."/>
            <person name="Kaul R."/>
            <person name="Swarbreck D."/>
            <person name="Dunham A."/>
            <person name="Scott C.E."/>
            <person name="Howe K.L."/>
            <person name="Woodfine K."/>
            <person name="Spencer C.C.A."/>
            <person name="Jones M.C."/>
            <person name="Gillson C."/>
            <person name="Searle S."/>
            <person name="Zhou Y."/>
            <person name="Kokocinski F."/>
            <person name="McDonald L."/>
            <person name="Evans R."/>
            <person name="Phillips K."/>
            <person name="Atkinson A."/>
            <person name="Cooper R."/>
            <person name="Jones C."/>
            <person name="Hall R.E."/>
            <person name="Andrews T.D."/>
            <person name="Lloyd C."/>
            <person name="Ainscough R."/>
            <person name="Almeida J.P."/>
            <person name="Ambrose K.D."/>
            <person name="Anderson F."/>
            <person name="Andrew R.W."/>
            <person name="Ashwell R.I.S."/>
            <person name="Aubin K."/>
            <person name="Babbage A.K."/>
            <person name="Bagguley C.L."/>
            <person name="Bailey J."/>
            <person name="Beasley H."/>
            <person name="Bethel G."/>
            <person name="Bird C.P."/>
            <person name="Bray-Allen S."/>
            <person name="Brown J.Y."/>
            <person name="Brown A.J."/>
            <person name="Buckley D."/>
            <person name="Burton J."/>
            <person name="Bye J."/>
            <person name="Carder C."/>
            <person name="Chapman J.C."/>
            <person name="Clark S.Y."/>
            <person name="Clarke G."/>
            <person name="Clee C."/>
            <person name="Cobley V."/>
            <person name="Collier R.E."/>
            <person name="Corby N."/>
            <person name="Coville G.J."/>
            <person name="Davies J."/>
            <person name="Deadman R."/>
            <person name="Dunn M."/>
            <person name="Earthrowl M."/>
            <person name="Ellington A.G."/>
            <person name="Errington H."/>
            <person name="Frankish A."/>
            <person name="Frankland J."/>
            <person name="French L."/>
            <person name="Garner P."/>
            <person name="Garnett J."/>
            <person name="Gay L."/>
            <person name="Ghori M.R.J."/>
            <person name="Gibson R."/>
            <person name="Gilby L.M."/>
            <person name="Gillett W."/>
            <person name="Glithero R.J."/>
            <person name="Grafham D.V."/>
            <person name="Griffiths C."/>
            <person name="Griffiths-Jones S."/>
            <person name="Grocock R."/>
            <person name="Hammond S."/>
            <person name="Harrison E.S.I."/>
            <person name="Hart E."/>
            <person name="Haugen E."/>
            <person name="Heath P.D."/>
            <person name="Holmes S."/>
            <person name="Holt K."/>
            <person name="Howden P.J."/>
            <person name="Hunt A.R."/>
            <person name="Hunt S.E."/>
            <person name="Hunter G."/>
            <person name="Isherwood J."/>
            <person name="James R."/>
            <person name="Johnson C."/>
            <person name="Johnson D."/>
            <person name="Joy A."/>
            <person name="Kay M."/>
            <person name="Kershaw J.K."/>
            <person name="Kibukawa M."/>
            <person name="Kimberley A.M."/>
            <person name="King A."/>
            <person name="Knights A.J."/>
            <person name="Lad H."/>
            <person name="Laird G."/>
            <person name="Lawlor S."/>
            <person name="Leongamornlert D.A."/>
            <person name="Lloyd D.M."/>
            <person name="Loveland J."/>
            <person name="Lovell J."/>
            <person name="Lush M.J."/>
            <person name="Lyne R."/>
            <person name="Martin S."/>
            <person name="Mashreghi-Mohammadi M."/>
            <person name="Matthews L."/>
            <person name="Matthews N.S.W."/>
            <person name="McLaren S."/>
            <person name="Milne S."/>
            <person name="Mistry S."/>
            <person name="Moore M.J.F."/>
            <person name="Nickerson T."/>
            <person name="O'Dell C.N."/>
            <person name="Oliver K."/>
            <person name="Palmeiri A."/>
            <person name="Palmer S.A."/>
            <person name="Parker A."/>
            <person name="Patel D."/>
            <person name="Pearce A.V."/>
            <person name="Peck A.I."/>
            <person name="Pelan S."/>
            <person name="Phelps K."/>
            <person name="Phillimore B.J."/>
            <person name="Plumb R."/>
            <person name="Rajan J."/>
            <person name="Raymond C."/>
            <person name="Rouse G."/>
            <person name="Saenphimmachak C."/>
            <person name="Sehra H.K."/>
            <person name="Sheridan E."/>
            <person name="Shownkeen R."/>
            <person name="Sims S."/>
            <person name="Skuce C.D."/>
            <person name="Smith M."/>
            <person name="Steward C."/>
            <person name="Subramanian S."/>
            <person name="Sycamore N."/>
            <person name="Tracey A."/>
            <person name="Tromans A."/>
            <person name="Van Helmond Z."/>
            <person name="Wall M."/>
            <person name="Wallis J.M."/>
            <person name="White S."/>
            <person name="Whitehead S.L."/>
            <person name="Wilkinson J.E."/>
            <person name="Willey D.L."/>
            <person name="Williams H."/>
            <person name="Wilming L."/>
            <person name="Wray P.W."/>
            <person name="Wu Z."/>
            <person name="Coulson A."/>
            <person name="Vaudin M."/>
            <person name="Sulston J.E."/>
            <person name="Durbin R.M."/>
            <person name="Hubbard T."/>
            <person name="Wooster R."/>
            <person name="Dunham I."/>
            <person name="Carter N.P."/>
            <person name="McVean G."/>
            <person name="Ross M.T."/>
            <person name="Harrow J."/>
            <person name="Olson M.V."/>
            <person name="Beck S."/>
            <person name="Rogers J."/>
            <person name="Bentley D.R."/>
        </authorList>
    </citation>
    <scope>NUCLEOTIDE SEQUENCE [LARGE SCALE GENOMIC DNA]</scope>
</reference>
<reference key="4">
    <citation type="submission" date="2005-09" db="EMBL/GenBank/DDBJ databases">
        <authorList>
            <person name="Mural R.J."/>
            <person name="Istrail S."/>
            <person name="Sutton G.G."/>
            <person name="Florea L."/>
            <person name="Halpern A.L."/>
            <person name="Mobarry C.M."/>
            <person name="Lippert R."/>
            <person name="Walenz B."/>
            <person name="Shatkay H."/>
            <person name="Dew I."/>
            <person name="Miller J.R."/>
            <person name="Flanigan M.J."/>
            <person name="Edwards N.J."/>
            <person name="Bolanos R."/>
            <person name="Fasulo D."/>
            <person name="Halldorsson B.V."/>
            <person name="Hannenhalli S."/>
            <person name="Turner R."/>
            <person name="Yooseph S."/>
            <person name="Lu F."/>
            <person name="Nusskern D.R."/>
            <person name="Shue B.C."/>
            <person name="Zheng X.H."/>
            <person name="Zhong F."/>
            <person name="Delcher A.L."/>
            <person name="Huson D.H."/>
            <person name="Kravitz S.A."/>
            <person name="Mouchard L."/>
            <person name="Reinert K."/>
            <person name="Remington K.A."/>
            <person name="Clark A.G."/>
            <person name="Waterman M.S."/>
            <person name="Eichler E.E."/>
            <person name="Adams M.D."/>
            <person name="Hunkapiller M.W."/>
            <person name="Myers E.W."/>
            <person name="Venter J.C."/>
        </authorList>
    </citation>
    <scope>NUCLEOTIDE SEQUENCE [LARGE SCALE GENOMIC DNA]</scope>
</reference>
<reference key="5">
    <citation type="journal article" date="2004" name="Genome Res.">
        <title>The status, quality, and expansion of the NIH full-length cDNA project: the Mammalian Gene Collection (MGC).</title>
        <authorList>
            <consortium name="The MGC Project Team"/>
        </authorList>
    </citation>
    <scope>NUCLEOTIDE SEQUENCE [LARGE SCALE MRNA] (ISOFORMS 2 AND 3)</scope>
    <scope>NUCLEOTIDE SEQUENCE [LARGE SCALE MRNA] OF 31-709 (ISOFORM 1)</scope>
    <scope>VARIANT VAL-159</scope>
    <source>
        <tissue>Ovary</tissue>
    </source>
</reference>
<reference key="6">
    <citation type="journal article" date="2007" name="Cancer Genet. Cytogenet.">
        <title>A common 93-kb duplicated DNA sequence at 1q21.2 in acute lymphoblastic leukemia and Burkitt lymphoma.</title>
        <authorList>
            <person name="La Starza R."/>
            <person name="Crescenzi B."/>
            <person name="Pierini V."/>
            <person name="Romoli S."/>
            <person name="Gorello P."/>
            <person name="Brandimarte L."/>
            <person name="Matteucci C."/>
            <person name="Kropp M.G."/>
            <person name="Barba G."/>
            <person name="Martelli M.F."/>
            <person name="Mecucci C."/>
        </authorList>
    </citation>
    <scope>TISSUE SPECIFICITY</scope>
</reference>
<dbReference type="EMBL" id="U78556">
    <property type="protein sequence ID" value="AAB36952.1"/>
    <property type="status" value="ALT_FRAME"/>
    <property type="molecule type" value="mRNA"/>
</dbReference>
<dbReference type="EMBL" id="U78557">
    <property type="protein sequence ID" value="AAB36953.1"/>
    <property type="status" value="ALT_FRAME"/>
    <property type="molecule type" value="mRNA"/>
</dbReference>
<dbReference type="EMBL" id="AK097000">
    <property type="protein sequence ID" value="BAG53406.1"/>
    <property type="molecule type" value="mRNA"/>
</dbReference>
<dbReference type="EMBL" id="AK296094">
    <property type="protein sequence ID" value="BAG58848.1"/>
    <property type="molecule type" value="mRNA"/>
</dbReference>
<dbReference type="EMBL" id="AK298775">
    <property type="protein sequence ID" value="BAG60917.1"/>
    <property type="molecule type" value="mRNA"/>
</dbReference>
<dbReference type="EMBL" id="AK304820">
    <property type="protein sequence ID" value="BAG65568.1"/>
    <property type="molecule type" value="mRNA"/>
</dbReference>
<dbReference type="EMBL" id="AL590487">
    <property type="protein sequence ID" value="CAI12649.1"/>
    <property type="molecule type" value="Genomic_DNA"/>
</dbReference>
<dbReference type="EMBL" id="CH471121">
    <property type="protein sequence ID" value="EAW53589.1"/>
    <property type="molecule type" value="Genomic_DNA"/>
</dbReference>
<dbReference type="EMBL" id="CH471121">
    <property type="protein sequence ID" value="EAW53590.1"/>
    <property type="molecule type" value="Genomic_DNA"/>
</dbReference>
<dbReference type="EMBL" id="CH471121">
    <property type="protein sequence ID" value="EAW53594.1"/>
    <property type="molecule type" value="Genomic_DNA"/>
</dbReference>
<dbReference type="EMBL" id="BC064372">
    <property type="status" value="NOT_ANNOTATED_CDS"/>
    <property type="molecule type" value="mRNA"/>
</dbReference>
<dbReference type="EMBL" id="BC094756">
    <property type="protein sequence ID" value="AAH94756.1"/>
    <property type="status" value="ALT_INIT"/>
    <property type="molecule type" value="mRNA"/>
</dbReference>
<dbReference type="EMBL" id="BC100818">
    <property type="protein sequence ID" value="AAI00819.1"/>
    <property type="molecule type" value="mRNA"/>
</dbReference>
<dbReference type="EMBL" id="BC100819">
    <property type="protein sequence ID" value="AAI00820.1"/>
    <property type="molecule type" value="mRNA"/>
</dbReference>
<dbReference type="EMBL" id="BC100820">
    <property type="protein sequence ID" value="AAI00821.1"/>
    <property type="molecule type" value="mRNA"/>
</dbReference>
<dbReference type="CCDS" id="CCDS72901.1">
    <molecule id="A4FU01-4"/>
</dbReference>
<dbReference type="CCDS" id="CCDS72902.1">
    <molecule id="A4FU01-1"/>
</dbReference>
<dbReference type="RefSeq" id="NP_001139334.1">
    <molecule id="A4FU01-1"/>
    <property type="nucleotide sequence ID" value="NM_001145862.2"/>
</dbReference>
<dbReference type="RefSeq" id="NP_870988.2">
    <molecule id="A4FU01-4"/>
    <property type="nucleotide sequence ID" value="NM_181873.3"/>
</dbReference>
<dbReference type="SMR" id="A4FU01"/>
<dbReference type="BioGRID" id="116109">
    <property type="interactions" value="20"/>
</dbReference>
<dbReference type="FunCoup" id="A4FU01">
    <property type="interactions" value="93"/>
</dbReference>
<dbReference type="IntAct" id="A4FU01">
    <property type="interactions" value="20"/>
</dbReference>
<dbReference type="MINT" id="A4FU01"/>
<dbReference type="STRING" id="9606.ENSP00000391668"/>
<dbReference type="DEPOD" id="MTMR11"/>
<dbReference type="GlyGen" id="A4FU01">
    <property type="glycosylation" value="3 sites, 1 O-linked glycan (3 sites)"/>
</dbReference>
<dbReference type="iPTMnet" id="A4FU01"/>
<dbReference type="PhosphoSitePlus" id="A4FU01"/>
<dbReference type="BioMuta" id="MTMR11"/>
<dbReference type="jPOST" id="A4FU01"/>
<dbReference type="MassIVE" id="A4FU01"/>
<dbReference type="PaxDb" id="9606-ENSP00000391668"/>
<dbReference type="PeptideAtlas" id="A4FU01"/>
<dbReference type="ProteomicsDB" id="656">
    <molecule id="A4FU01-1"/>
</dbReference>
<dbReference type="ProteomicsDB" id="657">
    <molecule id="A4FU01-2"/>
</dbReference>
<dbReference type="ProteomicsDB" id="658">
    <molecule id="A4FU01-3"/>
</dbReference>
<dbReference type="ProteomicsDB" id="659">
    <molecule id="A4FU01-4"/>
</dbReference>
<dbReference type="ProteomicsDB" id="660">
    <molecule id="A4FU01-5"/>
</dbReference>
<dbReference type="ProteomicsDB" id="661">
    <molecule id="A4FU01-6"/>
</dbReference>
<dbReference type="Antibodypedia" id="34015">
    <property type="antibodies" value="45 antibodies from 12 providers"/>
</dbReference>
<dbReference type="DNASU" id="10903"/>
<dbReference type="Ensembl" id="ENST00000369140.7">
    <molecule id="A4FU01-4"/>
    <property type="protein sequence ID" value="ENSP00000358136.3"/>
    <property type="gene ID" value="ENSG00000014914.21"/>
</dbReference>
<dbReference type="Ensembl" id="ENST00000439741.4">
    <molecule id="A4FU01-1"/>
    <property type="protein sequence ID" value="ENSP00000391668.2"/>
    <property type="gene ID" value="ENSG00000014914.21"/>
</dbReference>
<dbReference type="GeneID" id="10903"/>
<dbReference type="KEGG" id="hsa:10903"/>
<dbReference type="MANE-Select" id="ENST00000439741.4">
    <property type="protein sequence ID" value="ENSP00000391668.2"/>
    <property type="RefSeq nucleotide sequence ID" value="NM_001145862.2"/>
    <property type="RefSeq protein sequence ID" value="NP_001139334.1"/>
</dbReference>
<dbReference type="UCSC" id="uc001etl.5">
    <molecule id="A4FU01-1"/>
    <property type="organism name" value="human"/>
</dbReference>
<dbReference type="AGR" id="HGNC:24307"/>
<dbReference type="CTD" id="10903"/>
<dbReference type="DisGeNET" id="10903"/>
<dbReference type="GeneCards" id="MTMR11"/>
<dbReference type="HGNC" id="HGNC:24307">
    <property type="gene designation" value="MTMR11"/>
</dbReference>
<dbReference type="HPA" id="ENSG00000014914">
    <property type="expression patterns" value="Tissue enhanced (intestine)"/>
</dbReference>
<dbReference type="neXtProt" id="NX_A4FU01"/>
<dbReference type="OpenTargets" id="ENSG00000014914"/>
<dbReference type="PharmGKB" id="PA142671303"/>
<dbReference type="VEuPathDB" id="HostDB:ENSG00000014914"/>
<dbReference type="eggNOG" id="KOG1089">
    <property type="taxonomic scope" value="Eukaryota"/>
</dbReference>
<dbReference type="GeneTree" id="ENSGT00940000160276"/>
<dbReference type="HOGENOM" id="CLU_021912_1_0_1"/>
<dbReference type="InParanoid" id="A4FU01"/>
<dbReference type="OMA" id="GWQRSQD"/>
<dbReference type="OrthoDB" id="271628at2759"/>
<dbReference type="PAN-GO" id="A4FU01">
    <property type="GO annotations" value="4 GO annotations based on evolutionary models"/>
</dbReference>
<dbReference type="PhylomeDB" id="A4FU01"/>
<dbReference type="TreeFam" id="TF315197"/>
<dbReference type="PathwayCommons" id="A4FU01"/>
<dbReference type="SignaLink" id="A4FU01"/>
<dbReference type="BioGRID-ORCS" id="10903">
    <property type="hits" value="15 hits in 1161 CRISPR screens"/>
</dbReference>
<dbReference type="ChiTaRS" id="MTMR11">
    <property type="organism name" value="human"/>
</dbReference>
<dbReference type="GenomeRNAi" id="10903"/>
<dbReference type="Pharos" id="A4FU01">
    <property type="development level" value="Tdark"/>
</dbReference>
<dbReference type="PRO" id="PR:A4FU01"/>
<dbReference type="Proteomes" id="UP000005640">
    <property type="component" value="Chromosome 1"/>
</dbReference>
<dbReference type="RNAct" id="A4FU01">
    <property type="molecule type" value="protein"/>
</dbReference>
<dbReference type="Bgee" id="ENSG00000014914">
    <property type="expression patterns" value="Expressed in mucosa of transverse colon and 133 other cell types or tissues"/>
</dbReference>
<dbReference type="GO" id="GO:0005737">
    <property type="term" value="C:cytoplasm"/>
    <property type="evidence" value="ECO:0000314"/>
    <property type="project" value="UniProtKB"/>
</dbReference>
<dbReference type="GO" id="GO:0070062">
    <property type="term" value="C:extracellular exosome"/>
    <property type="evidence" value="ECO:0007005"/>
    <property type="project" value="UniProtKB"/>
</dbReference>
<dbReference type="GO" id="GO:0016020">
    <property type="term" value="C:membrane"/>
    <property type="evidence" value="ECO:0000318"/>
    <property type="project" value="GO_Central"/>
</dbReference>
<dbReference type="GO" id="GO:0004438">
    <property type="term" value="F:phosphatidylinositol-3-phosphate phosphatase activity"/>
    <property type="evidence" value="ECO:0000318"/>
    <property type="project" value="GO_Central"/>
</dbReference>
<dbReference type="GO" id="GO:0046856">
    <property type="term" value="P:phosphatidylinositol dephosphorylation"/>
    <property type="evidence" value="ECO:0000318"/>
    <property type="project" value="GO_Central"/>
</dbReference>
<dbReference type="InterPro" id="IPR022587">
    <property type="entry name" value="MTMR12-like_C"/>
</dbReference>
<dbReference type="InterPro" id="IPR030564">
    <property type="entry name" value="Myotubularin"/>
</dbReference>
<dbReference type="InterPro" id="IPR010569">
    <property type="entry name" value="Myotubularin-like_Pase_dom"/>
</dbReference>
<dbReference type="InterPro" id="IPR029021">
    <property type="entry name" value="Prot-tyrosine_phosphatase-like"/>
</dbReference>
<dbReference type="PANTHER" id="PTHR10807">
    <property type="entry name" value="MYOTUBULARIN-RELATED"/>
    <property type="match status" value="1"/>
</dbReference>
<dbReference type="PANTHER" id="PTHR10807:SF51">
    <property type="entry name" value="MYOTUBULARIN-RELATED PROTEIN 11"/>
    <property type="match status" value="1"/>
</dbReference>
<dbReference type="Pfam" id="PF12578">
    <property type="entry name" value="3-PAP"/>
    <property type="match status" value="1"/>
</dbReference>
<dbReference type="Pfam" id="PF06602">
    <property type="entry name" value="Myotub-related"/>
    <property type="match status" value="2"/>
</dbReference>
<dbReference type="SUPFAM" id="SSF52799">
    <property type="entry name" value="(Phosphotyrosine protein) phosphatases II"/>
    <property type="match status" value="1"/>
</dbReference>
<dbReference type="SUPFAM" id="SSF50729">
    <property type="entry name" value="PH domain-like"/>
    <property type="match status" value="1"/>
</dbReference>
<dbReference type="PROSITE" id="PS51339">
    <property type="entry name" value="PPASE_MYOTUBULARIN"/>
    <property type="match status" value="1"/>
</dbReference>
<proteinExistence type="evidence at protein level"/>
<keyword id="KW-0025">Alternative splicing</keyword>
<keyword id="KW-1267">Proteomics identification</keyword>
<keyword id="KW-1185">Reference proteome</keyword>
<sequence>MWWGGRGQSFNIAPQKEEPEMGSVQENRMPEPRSRQPSSCLASRCLPGEQILAWAPGVRKGLEPELSGTLICTNFRVTFQPCGWQWNQDTPLNSEYDFALVNIGRLEAVSGLSRVQLLRPGSLHKFIPEEILIHGRDFRLLRVGFEAGGLEPQAFQVTMAIVQARAQSNQAQQYSGITLSKAGQGSGSRKPPIPLMETAEDWETERKKQAARGWRVSTVNERFDVATSLPRYFWVPNRILDSEVRRAFGHFHQGRGPRLSWHHPGGSDLLRCGGFYTASDPNKEDIRAVELMLQAGHSDVVLVDTMDELPSLADVQLAHLRLRALCLPDSSVAEDKWLSALEGTRWLDYVRACLRKASDISVLVTSRVRSVILQERGDRDLNGLLSSLVQLLSAPEARTLFGFQSLVQREWVAAGHPFLTRLGGTGASEEAPVFLLFLDCVWQLLQQFPADFEFSEFFLLALHDSVRVPDTLTFLRNTPWERGKQSGQLNSYTQVYTPGYSQPPAGNSFNLQLSVWDWDLRYSNAQILQFQNPGYDPEHCPDSWLPRPQPSFMVPGPPSSVWLFSRGALTPLNQLCPWRDSPSLLAVSSRWLPRPAISSESLADQEWGLPSHWGACPLPPGLLLPGYLGPQIRLWRRCYLRGRPEVQMGLSAPTISGLQDELSHLQELLRKWTPRISPEDHSKKRDPHTILNPTEIAGILKGRAEGDLG</sequence>
<name>MTMRB_HUMAN</name>
<accession>A4FU01</accession>
<accession>B3KUE4</accession>
<accession>B4DJI6</accession>
<accession>B4DQF5</accession>
<accession>B4E3Q6</accession>
<accession>Q3ZCP7</accession>
<accession>Q5SZ62</accession>
<accession>Q6P2Q8</accession>
<accession>Q99752</accession>
<accession>Q99753</accession>
<protein>
    <recommendedName>
        <fullName>Myotubularin-related protein 11</fullName>
    </recommendedName>
    <alternativeName>
        <fullName>Cisplatin resistance-associated protein</fullName>
        <shortName>hCRA</shortName>
    </alternativeName>
    <alternativeName>
        <fullName evidence="8">Inactive phosphatidylinositol 3-phosphatase 11</fullName>
    </alternativeName>
</protein>